<protein>
    <recommendedName>
        <fullName evidence="1">UPF0756 membrane protein BH3161</fullName>
    </recommendedName>
</protein>
<feature type="chain" id="PRO_0000388831" description="UPF0756 membrane protein BH3161">
    <location>
        <begin position="1"/>
        <end position="157"/>
    </location>
</feature>
<feature type="transmembrane region" description="Helical" evidence="1">
    <location>
        <begin position="1"/>
        <end position="21"/>
    </location>
</feature>
<feature type="transmembrane region" description="Helical" evidence="1">
    <location>
        <begin position="54"/>
        <end position="74"/>
    </location>
</feature>
<feature type="transmembrane region" description="Helical" evidence="1">
    <location>
        <begin position="87"/>
        <end position="107"/>
    </location>
</feature>
<feature type="transmembrane region" description="Helical" evidence="1">
    <location>
        <begin position="117"/>
        <end position="137"/>
    </location>
</feature>
<comment type="subcellular location">
    <subcellularLocation>
        <location evidence="1">Cell membrane</location>
        <topology evidence="1">Multi-pass membrane protein</topology>
    </subcellularLocation>
</comment>
<comment type="similarity">
    <text evidence="1">Belongs to the UPF0756 family.</text>
</comment>
<reference key="1">
    <citation type="journal article" date="2000" name="Nucleic Acids Res.">
        <title>Complete genome sequence of the alkaliphilic bacterium Bacillus halodurans and genomic sequence comparison with Bacillus subtilis.</title>
        <authorList>
            <person name="Takami H."/>
            <person name="Nakasone K."/>
            <person name="Takaki Y."/>
            <person name="Maeno G."/>
            <person name="Sasaki R."/>
            <person name="Masui N."/>
            <person name="Fuji F."/>
            <person name="Hirama C."/>
            <person name="Nakamura Y."/>
            <person name="Ogasawara N."/>
            <person name="Kuhara S."/>
            <person name="Horikoshi K."/>
        </authorList>
    </citation>
    <scope>NUCLEOTIDE SEQUENCE [LARGE SCALE GENOMIC DNA]</scope>
    <source>
        <strain>ATCC BAA-125 / DSM 18197 / FERM 7344 / JCM 9153 / C-125</strain>
    </source>
</reference>
<sequence>MISQATIFMLVLLVIALLAKNQSLLIAVLVLLVIKFIGVGDKVFPFFQQKGISLGVTIITIAVLTPIATGEIGFKQMGEAIRSSYAWVALLSGVVVALIAASGIDLLKNDPHITTALVLGTILAVAVFNGVAVGPLIGAGIAYLTMKVVQWLGSFWG</sequence>
<proteinExistence type="inferred from homology"/>
<organism>
    <name type="scientific">Halalkalibacterium halodurans (strain ATCC BAA-125 / DSM 18197 / FERM 7344 / JCM 9153 / C-125)</name>
    <name type="common">Bacillus halodurans</name>
    <dbReference type="NCBI Taxonomy" id="272558"/>
    <lineage>
        <taxon>Bacteria</taxon>
        <taxon>Bacillati</taxon>
        <taxon>Bacillota</taxon>
        <taxon>Bacilli</taxon>
        <taxon>Bacillales</taxon>
        <taxon>Bacillaceae</taxon>
        <taxon>Halalkalibacterium (ex Joshi et al. 2022)</taxon>
    </lineage>
</organism>
<keyword id="KW-1003">Cell membrane</keyword>
<keyword id="KW-0472">Membrane</keyword>
<keyword id="KW-1185">Reference proteome</keyword>
<keyword id="KW-0812">Transmembrane</keyword>
<keyword id="KW-1133">Transmembrane helix</keyword>
<gene>
    <name type="ordered locus">BH3161</name>
</gene>
<evidence type="ECO:0000255" key="1">
    <source>
        <dbReference type="HAMAP-Rule" id="MF_01874"/>
    </source>
</evidence>
<dbReference type="EMBL" id="BA000004">
    <property type="protein sequence ID" value="BAB06880.1"/>
    <property type="molecule type" value="Genomic_DNA"/>
</dbReference>
<dbReference type="PIR" id="A84045">
    <property type="entry name" value="A84045"/>
</dbReference>
<dbReference type="STRING" id="272558.gene:10729073"/>
<dbReference type="KEGG" id="bha:BH3161"/>
<dbReference type="eggNOG" id="COG2707">
    <property type="taxonomic scope" value="Bacteria"/>
</dbReference>
<dbReference type="HOGENOM" id="CLU_125889_1_0_9"/>
<dbReference type="OrthoDB" id="80306at2"/>
<dbReference type="Proteomes" id="UP000001258">
    <property type="component" value="Chromosome"/>
</dbReference>
<dbReference type="GO" id="GO:0005886">
    <property type="term" value="C:plasma membrane"/>
    <property type="evidence" value="ECO:0007669"/>
    <property type="project" value="UniProtKB-SubCell"/>
</dbReference>
<dbReference type="HAMAP" id="MF_01874">
    <property type="entry name" value="UPF0756"/>
    <property type="match status" value="1"/>
</dbReference>
<dbReference type="InterPro" id="IPR007382">
    <property type="entry name" value="UPF0756_TM"/>
</dbReference>
<dbReference type="PANTHER" id="PTHR38452">
    <property type="entry name" value="UPF0756 MEMBRANE PROTEIN YEAL"/>
    <property type="match status" value="1"/>
</dbReference>
<dbReference type="PANTHER" id="PTHR38452:SF1">
    <property type="entry name" value="UPF0756 MEMBRANE PROTEIN YEAL"/>
    <property type="match status" value="1"/>
</dbReference>
<dbReference type="Pfam" id="PF04284">
    <property type="entry name" value="DUF441"/>
    <property type="match status" value="1"/>
</dbReference>
<name>Y3161_HALH5</name>
<accession>Q9K846</accession>